<keyword id="KW-1185">Reference proteome</keyword>
<feature type="chain" id="PRO_0000379003" description="FHIP family protein CBG19667">
    <location>
        <begin position="1"/>
        <end position="872"/>
    </location>
</feature>
<feature type="region of interest" description="Disordered" evidence="1">
    <location>
        <begin position="800"/>
        <end position="841"/>
    </location>
</feature>
<feature type="compositionally biased region" description="Basic and acidic residues" evidence="1">
    <location>
        <begin position="829"/>
        <end position="841"/>
    </location>
</feature>
<protein>
    <recommendedName>
        <fullName>FHIP family protein CBG19667</fullName>
    </recommendedName>
</protein>
<comment type="similarity">
    <text evidence="2">Belongs to the FHIP family.</text>
</comment>
<evidence type="ECO:0000256" key="1">
    <source>
        <dbReference type="SAM" id="MobiDB-lite"/>
    </source>
</evidence>
<evidence type="ECO:0000305" key="2"/>
<dbReference type="EMBL" id="HE600934">
    <property type="protein sequence ID" value="CAP36871.2"/>
    <property type="molecule type" value="Genomic_DNA"/>
</dbReference>
<dbReference type="RefSeq" id="XP_045096838.1">
    <property type="nucleotide sequence ID" value="XM_045243587.1"/>
</dbReference>
<dbReference type="SMR" id="A8XW52"/>
<dbReference type="FunCoup" id="A8XW52">
    <property type="interactions" value="560"/>
</dbReference>
<dbReference type="STRING" id="6238.A8XW52"/>
<dbReference type="GeneID" id="8576674"/>
<dbReference type="WormBase" id="CBG19667">
    <property type="protein sequence ID" value="CBP42358"/>
    <property type="gene ID" value="WBGene00038842"/>
</dbReference>
<dbReference type="eggNOG" id="KOG3695">
    <property type="taxonomic scope" value="Eukaryota"/>
</dbReference>
<dbReference type="HOGENOM" id="CLU_008561_0_0_1"/>
<dbReference type="InParanoid" id="A8XW52"/>
<dbReference type="OMA" id="IIRIFEM"/>
<dbReference type="Proteomes" id="UP000008549">
    <property type="component" value="Unassembled WGS sequence"/>
</dbReference>
<dbReference type="InterPro" id="IPR019384">
    <property type="entry name" value="FHIP"/>
</dbReference>
<dbReference type="InterPro" id="IPR045669">
    <property type="entry name" value="FHIP_C"/>
</dbReference>
<dbReference type="PANTHER" id="PTHR21705:SF11">
    <property type="entry name" value="FHIP FAMILY PROTEIN CG3558"/>
    <property type="match status" value="1"/>
</dbReference>
<dbReference type="PANTHER" id="PTHR21705">
    <property type="entry name" value="RAI16 PROTEIN-RELATED"/>
    <property type="match status" value="1"/>
</dbReference>
<dbReference type="Pfam" id="PF19314">
    <property type="entry name" value="DUF5917"/>
    <property type="match status" value="1"/>
</dbReference>
<dbReference type="Pfam" id="PF10257">
    <property type="entry name" value="RAI16-like"/>
    <property type="match status" value="1"/>
</dbReference>
<reference key="1">
    <citation type="journal article" date="2003" name="PLoS Biol.">
        <title>The genome sequence of Caenorhabditis briggsae: a platform for comparative genomics.</title>
        <authorList>
            <person name="Stein L.D."/>
            <person name="Bao Z."/>
            <person name="Blasiar D."/>
            <person name="Blumenthal T."/>
            <person name="Brent M.R."/>
            <person name="Chen N."/>
            <person name="Chinwalla A."/>
            <person name="Clarke L."/>
            <person name="Clee C."/>
            <person name="Coghlan A."/>
            <person name="Coulson A."/>
            <person name="D'Eustachio P."/>
            <person name="Fitch D.H.A."/>
            <person name="Fulton L.A."/>
            <person name="Fulton R.E."/>
            <person name="Griffiths-Jones S."/>
            <person name="Harris T.W."/>
            <person name="Hillier L.W."/>
            <person name="Kamath R."/>
            <person name="Kuwabara P.E."/>
            <person name="Mardis E.R."/>
            <person name="Marra M.A."/>
            <person name="Miner T.L."/>
            <person name="Minx P."/>
            <person name="Mullikin J.C."/>
            <person name="Plumb R.W."/>
            <person name="Rogers J."/>
            <person name="Schein J.E."/>
            <person name="Sohrmann M."/>
            <person name="Spieth J."/>
            <person name="Stajich J.E."/>
            <person name="Wei C."/>
            <person name="Willey D."/>
            <person name="Wilson R.K."/>
            <person name="Durbin R.M."/>
            <person name="Waterston R.H."/>
        </authorList>
    </citation>
    <scope>NUCLEOTIDE SEQUENCE [LARGE SCALE GENOMIC DNA]</scope>
    <source>
        <strain>AF16</strain>
    </source>
</reference>
<accession>A8XW52</accession>
<sequence>MSSTAVSRARWSSAYASDPTEWERLFEGKWNVVSNILERKLIDPEHKVVYDELMSLLENMTNMCTLLMLEANSQPEPMIGPILDKFFTEQILERVLDWSIQLTDSLKSICQLAIIRIFEMIVSDSHSQNHCLLVHKPILNPLFRLCEWFQRADIYWRVSKSENKKTSEAEKMFVLLLNQICTKLVEDRTLLHFFFHSNQFVVFTELIPFLYSAGDTGQLARDAVLLILSVSAEDKSIAEYVTERTSFCQVLTTGLSACFSQLPRRILGDGGERLVEDEYRDFLADYHSALLFCNAIAQTAHSEVVGNIAEFFYTGFLTNVIKPAFLQNDREYIGASMVYLQMCIETIVEPLLVKSVVQMILTERDDNGTIFFEIVISYVKGGDKTSVTALSLIDSFIKLACEDVMLALVFRPLLTNHSATKKQLSVVYKASRGGHLSQAYLNCIPVCGLPCSFELYMFSTRIRMDARAEQCRKWKWKYDGVVAGSFVLPAESDDDATCHVSFSRMSSSRSSVSMAPYRYTNGTHPSFNINKVCALGKPREEDFSEMEDDLLEEDNDFILPNIDMEDFGEEMTASKVMTQSTIDYMHISGLDGSESDDAMPIRVEDSETDTEAPKSSFVLSGWREVNDMETFKQLLSKQEVKGERLPAENIMDFINEKYDSLKLGEDEKEGKEEKDLEENLIEEPRKRIVTDGFSIYAFPERSKLLQTILEGVETLCENELPFNTELFCLIADLATYPQPILAYYLFDPKQDSSEKHLLTILQSVQTRIDVMAEGIESFDTWIEKGLEALEARACRIRQQSRSSPRSADEHDSTLFYGRSTIPPPGRKPLLREPSHQETLDDQTARRTALAAILLSHLCQMLAAIVLQQSLII</sequence>
<organism>
    <name type="scientific">Caenorhabditis briggsae</name>
    <dbReference type="NCBI Taxonomy" id="6238"/>
    <lineage>
        <taxon>Eukaryota</taxon>
        <taxon>Metazoa</taxon>
        <taxon>Ecdysozoa</taxon>
        <taxon>Nematoda</taxon>
        <taxon>Chromadorea</taxon>
        <taxon>Rhabditida</taxon>
        <taxon>Rhabditina</taxon>
        <taxon>Rhabditomorpha</taxon>
        <taxon>Rhabditoidea</taxon>
        <taxon>Rhabditidae</taxon>
        <taxon>Peloderinae</taxon>
        <taxon>Caenorhabditis</taxon>
    </lineage>
</organism>
<gene>
    <name type="ORF">CBG19667</name>
</gene>
<name>U518_CAEBR</name>
<proteinExistence type="inferred from homology"/>